<dbReference type="EC" id="4.2.1.2" evidence="1"/>
<dbReference type="EMBL" id="AE016877">
    <property type="protein sequence ID" value="AAP08688.1"/>
    <property type="molecule type" value="Genomic_DNA"/>
</dbReference>
<dbReference type="RefSeq" id="NP_831487.1">
    <property type="nucleotide sequence ID" value="NC_004722.1"/>
</dbReference>
<dbReference type="RefSeq" id="WP_000456610.1">
    <property type="nucleotide sequence ID" value="NZ_CP138336.1"/>
</dbReference>
<dbReference type="SMR" id="Q81F85"/>
<dbReference type="STRING" id="226900.BC_1712"/>
<dbReference type="MetOSite" id="Q81F85"/>
<dbReference type="KEGG" id="bce:BC1712"/>
<dbReference type="PATRIC" id="fig|226900.8.peg.1700"/>
<dbReference type="HOGENOM" id="CLU_021594_4_1_9"/>
<dbReference type="OrthoDB" id="9802809at2"/>
<dbReference type="UniPathway" id="UPA00223">
    <property type="reaction ID" value="UER01007"/>
</dbReference>
<dbReference type="Proteomes" id="UP000001417">
    <property type="component" value="Chromosome"/>
</dbReference>
<dbReference type="GO" id="GO:0005737">
    <property type="term" value="C:cytoplasm"/>
    <property type="evidence" value="ECO:0007669"/>
    <property type="project" value="UniProtKB-SubCell"/>
</dbReference>
<dbReference type="GO" id="GO:0004333">
    <property type="term" value="F:fumarate hydratase activity"/>
    <property type="evidence" value="ECO:0000318"/>
    <property type="project" value="GO_Central"/>
</dbReference>
<dbReference type="GO" id="GO:0006106">
    <property type="term" value="P:fumarate metabolic process"/>
    <property type="evidence" value="ECO:0000318"/>
    <property type="project" value="GO_Central"/>
</dbReference>
<dbReference type="GO" id="GO:0006108">
    <property type="term" value="P:malate metabolic process"/>
    <property type="evidence" value="ECO:0000318"/>
    <property type="project" value="GO_Central"/>
</dbReference>
<dbReference type="GO" id="GO:0006099">
    <property type="term" value="P:tricarboxylic acid cycle"/>
    <property type="evidence" value="ECO:0000318"/>
    <property type="project" value="GO_Central"/>
</dbReference>
<dbReference type="CDD" id="cd01362">
    <property type="entry name" value="Fumarase_classII"/>
    <property type="match status" value="1"/>
</dbReference>
<dbReference type="FunFam" id="1.10.40.30:FF:000002">
    <property type="entry name" value="Fumarate hydratase class II"/>
    <property type="match status" value="1"/>
</dbReference>
<dbReference type="FunFam" id="1.10.275.10:FF:000001">
    <property type="entry name" value="Fumarate hydratase, mitochondrial"/>
    <property type="match status" value="1"/>
</dbReference>
<dbReference type="FunFam" id="1.20.200.10:FF:000001">
    <property type="entry name" value="Fumarate hydratase, mitochondrial"/>
    <property type="match status" value="1"/>
</dbReference>
<dbReference type="Gene3D" id="1.10.40.30">
    <property type="entry name" value="Fumarase/aspartase (C-terminal domain)"/>
    <property type="match status" value="1"/>
</dbReference>
<dbReference type="Gene3D" id="1.20.200.10">
    <property type="entry name" value="Fumarase/aspartase (Central domain)"/>
    <property type="match status" value="1"/>
</dbReference>
<dbReference type="Gene3D" id="1.10.275.10">
    <property type="entry name" value="Fumarase/aspartase (N-terminal domain)"/>
    <property type="match status" value="1"/>
</dbReference>
<dbReference type="HAMAP" id="MF_00743">
    <property type="entry name" value="FumaraseC"/>
    <property type="match status" value="1"/>
</dbReference>
<dbReference type="InterPro" id="IPR005677">
    <property type="entry name" value="Fum_hydII"/>
</dbReference>
<dbReference type="InterPro" id="IPR024083">
    <property type="entry name" value="Fumarase/histidase_N"/>
</dbReference>
<dbReference type="InterPro" id="IPR018951">
    <property type="entry name" value="Fumarase_C_C"/>
</dbReference>
<dbReference type="InterPro" id="IPR020557">
    <property type="entry name" value="Fumarate_lyase_CS"/>
</dbReference>
<dbReference type="InterPro" id="IPR000362">
    <property type="entry name" value="Fumarate_lyase_fam"/>
</dbReference>
<dbReference type="InterPro" id="IPR022761">
    <property type="entry name" value="Fumarate_lyase_N"/>
</dbReference>
<dbReference type="InterPro" id="IPR008948">
    <property type="entry name" value="L-Aspartase-like"/>
</dbReference>
<dbReference type="NCBIfam" id="TIGR00979">
    <property type="entry name" value="fumC_II"/>
    <property type="match status" value="1"/>
</dbReference>
<dbReference type="NCBIfam" id="NF008909">
    <property type="entry name" value="PRK12273.1"/>
    <property type="match status" value="1"/>
</dbReference>
<dbReference type="PANTHER" id="PTHR11444">
    <property type="entry name" value="ASPARTATEAMMONIA/ARGININOSUCCINATE/ADENYLOSUCCINATE LYASE"/>
    <property type="match status" value="1"/>
</dbReference>
<dbReference type="PANTHER" id="PTHR11444:SF1">
    <property type="entry name" value="FUMARATE HYDRATASE, MITOCHONDRIAL"/>
    <property type="match status" value="1"/>
</dbReference>
<dbReference type="Pfam" id="PF10415">
    <property type="entry name" value="FumaraseC_C"/>
    <property type="match status" value="1"/>
</dbReference>
<dbReference type="Pfam" id="PF00206">
    <property type="entry name" value="Lyase_1"/>
    <property type="match status" value="1"/>
</dbReference>
<dbReference type="PRINTS" id="PR00149">
    <property type="entry name" value="FUMRATELYASE"/>
</dbReference>
<dbReference type="SUPFAM" id="SSF48557">
    <property type="entry name" value="L-aspartase-like"/>
    <property type="match status" value="1"/>
</dbReference>
<dbReference type="PROSITE" id="PS00163">
    <property type="entry name" value="FUMARATE_LYASES"/>
    <property type="match status" value="1"/>
</dbReference>
<keyword id="KW-0963">Cytoplasm</keyword>
<keyword id="KW-0456">Lyase</keyword>
<keyword id="KW-1185">Reference proteome</keyword>
<keyword id="KW-0816">Tricarboxylic acid cycle</keyword>
<sequence length="462" mass="50347">MEYRIERDTLGEIKVPADKLWAAQTQRSKENFPIGTEQMPLEIVKAFAILKKSAALSNQKLGKLSEEKAEAIVEAADEVIAGKWNEHFPLVVWQTGSGTQSNMNVNEVIANRGNQILKEKGSDVHIHPNDDVNMSQSSNDTFPTALHVACVIAVENHVLPAITKLKETLVEKVTAFEHIIKIGRTHLQDATPLTLGQEISGWHRMLEKTERMIAESNTYMKELAIGGTAVGTGINAHPKFGEMVSEEISQFTGKQFVSAPNKFHALTSHDEVVYTHGALKALAADLMKIANDVRWLASGPRSGLGEIIIPANEPGSSIMPGKVNPTQSEALTMVVAQVMGNDATIGFAASQGNFELNVFKPVIAYNFLQSAHLLADAIVSFNDNCAVGIEADEEVINENVNRSLMLVTALNPHIGYENAAKIAKHAHKEGLTLKEAALQSGLLTEEQFDEIVDPKKMIAPKE</sequence>
<proteinExistence type="inferred from homology"/>
<comment type="function">
    <text evidence="1">Involved in the TCA cycle. Catalyzes the stereospecific interconversion of fumarate to L-malate.</text>
</comment>
<comment type="catalytic activity">
    <reaction evidence="1">
        <text>(S)-malate = fumarate + H2O</text>
        <dbReference type="Rhea" id="RHEA:12460"/>
        <dbReference type="ChEBI" id="CHEBI:15377"/>
        <dbReference type="ChEBI" id="CHEBI:15589"/>
        <dbReference type="ChEBI" id="CHEBI:29806"/>
        <dbReference type="EC" id="4.2.1.2"/>
    </reaction>
</comment>
<comment type="pathway">
    <text evidence="1">Carbohydrate metabolism; tricarboxylic acid cycle; (S)-malate from fumarate: step 1/1.</text>
</comment>
<comment type="subunit">
    <text evidence="1">Homotetramer.</text>
</comment>
<comment type="subcellular location">
    <subcellularLocation>
        <location evidence="1">Cytoplasm</location>
    </subcellularLocation>
</comment>
<comment type="miscellaneous">
    <text evidence="1">There are 2 substrate-binding sites: the catalytic A site, and the non-catalytic B site that may play a role in the transfer of substrate or product between the active site and the solvent. Alternatively, the B site may bind allosteric effectors.</text>
</comment>
<comment type="similarity">
    <text evidence="1">Belongs to the class-II fumarase/aspartase family. Fumarase subfamily.</text>
</comment>
<organism>
    <name type="scientific">Bacillus cereus (strain ATCC 14579 / DSM 31 / CCUG 7414 / JCM 2152 / NBRC 15305 / NCIMB 9373 / NCTC 2599 / NRRL B-3711)</name>
    <dbReference type="NCBI Taxonomy" id="226900"/>
    <lineage>
        <taxon>Bacteria</taxon>
        <taxon>Bacillati</taxon>
        <taxon>Bacillota</taxon>
        <taxon>Bacilli</taxon>
        <taxon>Bacillales</taxon>
        <taxon>Bacillaceae</taxon>
        <taxon>Bacillus</taxon>
        <taxon>Bacillus cereus group</taxon>
    </lineage>
</organism>
<protein>
    <recommendedName>
        <fullName evidence="1">Fumarate hydratase class II</fullName>
        <shortName evidence="1">Fumarase C</shortName>
        <ecNumber evidence="1">4.2.1.2</ecNumber>
    </recommendedName>
    <alternativeName>
        <fullName evidence="1">Aerobic fumarase</fullName>
    </alternativeName>
    <alternativeName>
        <fullName evidence="1">Iron-independent fumarase</fullName>
    </alternativeName>
</protein>
<reference key="1">
    <citation type="journal article" date="2003" name="Nature">
        <title>Genome sequence of Bacillus cereus and comparative analysis with Bacillus anthracis.</title>
        <authorList>
            <person name="Ivanova N."/>
            <person name="Sorokin A."/>
            <person name="Anderson I."/>
            <person name="Galleron N."/>
            <person name="Candelon B."/>
            <person name="Kapatral V."/>
            <person name="Bhattacharyya A."/>
            <person name="Reznik G."/>
            <person name="Mikhailova N."/>
            <person name="Lapidus A."/>
            <person name="Chu L."/>
            <person name="Mazur M."/>
            <person name="Goltsman E."/>
            <person name="Larsen N."/>
            <person name="D'Souza M."/>
            <person name="Walunas T."/>
            <person name="Grechkin Y."/>
            <person name="Pusch G."/>
            <person name="Haselkorn R."/>
            <person name="Fonstein M."/>
            <person name="Ehrlich S.D."/>
            <person name="Overbeek R."/>
            <person name="Kyrpides N.C."/>
        </authorList>
    </citation>
    <scope>NUCLEOTIDE SEQUENCE [LARGE SCALE GENOMIC DNA]</scope>
    <source>
        <strain>ATCC 14579 / DSM 31 / CCUG 7414 / JCM 2152 / NBRC 15305 / NCIMB 9373 / NCTC 2599 / NRRL B-3711</strain>
    </source>
</reference>
<accession>Q81F85</accession>
<feature type="chain" id="PRO_0000161253" description="Fumarate hydratase class II">
    <location>
        <begin position="1"/>
        <end position="462"/>
    </location>
</feature>
<feature type="active site" description="Proton donor/acceptor" evidence="1">
    <location>
        <position position="186"/>
    </location>
</feature>
<feature type="active site" evidence="1">
    <location>
        <position position="316"/>
    </location>
</feature>
<feature type="binding site" evidence="1">
    <location>
        <begin position="97"/>
        <end position="99"/>
    </location>
    <ligand>
        <name>substrate</name>
    </ligand>
</feature>
<feature type="binding site" description="in site B" evidence="1">
    <location>
        <begin position="127"/>
        <end position="130"/>
    </location>
    <ligand>
        <name>substrate</name>
    </ligand>
</feature>
<feature type="binding site" evidence="1">
    <location>
        <begin position="137"/>
        <end position="139"/>
    </location>
    <ligand>
        <name>substrate</name>
    </ligand>
</feature>
<feature type="binding site" evidence="1">
    <location>
        <position position="185"/>
    </location>
    <ligand>
        <name>substrate</name>
    </ligand>
</feature>
<feature type="binding site" evidence="1">
    <location>
        <position position="317"/>
    </location>
    <ligand>
        <name>substrate</name>
    </ligand>
</feature>
<feature type="binding site" evidence="1">
    <location>
        <begin position="322"/>
        <end position="324"/>
    </location>
    <ligand>
        <name>substrate</name>
    </ligand>
</feature>
<feature type="site" description="Important for catalytic activity" evidence="1">
    <location>
        <position position="329"/>
    </location>
</feature>
<gene>
    <name evidence="1" type="primary">fumC</name>
    <name type="ordered locus">BC_1712</name>
</gene>
<name>FUMC_BACCR</name>
<evidence type="ECO:0000255" key="1">
    <source>
        <dbReference type="HAMAP-Rule" id="MF_00743"/>
    </source>
</evidence>